<evidence type="ECO:0000250" key="1">
    <source>
        <dbReference type="UniProtKB" id="Q9NP61"/>
    </source>
</evidence>
<evidence type="ECO:0000255" key="2"/>
<evidence type="ECO:0000255" key="3">
    <source>
        <dbReference type="PROSITE-ProRule" id="PRU00288"/>
    </source>
</evidence>
<evidence type="ECO:0000256" key="4">
    <source>
        <dbReference type="SAM" id="MobiDB-lite"/>
    </source>
</evidence>
<evidence type="ECO:0000312" key="5">
    <source>
        <dbReference type="EMBL" id="CAH92373.1"/>
    </source>
</evidence>
<reference evidence="5" key="1">
    <citation type="submission" date="2004-11" db="EMBL/GenBank/DDBJ databases">
        <authorList>
            <consortium name="The German cDNA consortium"/>
        </authorList>
    </citation>
    <scope>NUCLEOTIDE SEQUENCE [LARGE SCALE MRNA]</scope>
    <source>
        <tissue evidence="5">Kidney</tissue>
    </source>
</reference>
<feature type="chain" id="PRO_0000314054" description="ADP-ribosylation factor GTPase-activating protein 3">
    <location>
        <begin position="1"/>
        <end position="516"/>
    </location>
</feature>
<feature type="domain" description="Arf-GAP" evidence="3">
    <location>
        <begin position="10"/>
        <end position="126"/>
    </location>
</feature>
<feature type="zinc finger region" description="C4-type" evidence="3">
    <location>
        <begin position="25"/>
        <end position="48"/>
    </location>
</feature>
<feature type="region of interest" description="Disordered" evidence="4">
    <location>
        <begin position="170"/>
        <end position="199"/>
    </location>
</feature>
<feature type="region of interest" description="Disordered" evidence="4">
    <location>
        <begin position="393"/>
        <end position="417"/>
    </location>
</feature>
<feature type="coiled-coil region" evidence="2">
    <location>
        <begin position="243"/>
        <end position="264"/>
    </location>
</feature>
<feature type="compositionally biased region" description="Polar residues" evidence="4">
    <location>
        <begin position="173"/>
        <end position="190"/>
    </location>
</feature>
<feature type="modified residue" description="Phosphoserine" evidence="1">
    <location>
        <position position="231"/>
    </location>
</feature>
<feature type="modified residue" description="Phosphoserine" evidence="1">
    <location>
        <position position="270"/>
    </location>
</feature>
<feature type="modified residue" description="Phosphoserine" evidence="1">
    <location>
        <position position="274"/>
    </location>
</feature>
<feature type="modified residue" description="Phosphoserine" evidence="1">
    <location>
        <position position="331"/>
    </location>
</feature>
<feature type="modified residue" description="Phosphoserine" evidence="1">
    <location>
        <position position="370"/>
    </location>
</feature>
<feature type="modified residue" description="Phosphoserine" evidence="1">
    <location>
        <position position="428"/>
    </location>
</feature>
<feature type="modified residue" description="Phosphoserine" evidence="1">
    <location>
        <position position="451"/>
    </location>
</feature>
<feature type="modified residue" description="Phosphoserine" evidence="1">
    <location>
        <position position="453"/>
    </location>
</feature>
<feature type="modified residue" description="Phosphoserine" evidence="1">
    <location>
        <position position="455"/>
    </location>
</feature>
<feature type="modified residue" description="Phosphoserine" evidence="1">
    <location>
        <position position="457"/>
    </location>
</feature>
<feature type="modified residue" description="Phosphoserine" evidence="1">
    <location>
        <position position="458"/>
    </location>
</feature>
<proteinExistence type="evidence at transcript level"/>
<accession>Q5R787</accession>
<comment type="function">
    <text evidence="1">GTPase-activating protein (GAP) for ADP ribosylation factor 1 (ARF1). Hydrolysis of ARF1-bound GTP may lead to dissociation of coatomer from Golgi-derived membranes to allow fusion with target membranes (By similarity).</text>
</comment>
<comment type="activity regulation">
    <text evidence="1">GAP activity stimulated by phosphatidylinositol 4,5-bisphosphate (PIP2).</text>
</comment>
<comment type="subcellular location">
    <subcellularLocation>
        <location evidence="1">Cytoplasm</location>
    </subcellularLocation>
    <subcellularLocation>
        <location evidence="1">Golgi apparatus membrane</location>
        <topology evidence="1">Peripheral membrane protein</topology>
        <orientation evidence="1">Cytoplasmic side</orientation>
    </subcellularLocation>
    <text evidence="1">Also found on peripheral punctate structures likely to be endoplasmic reticulum-Golgi intermediate compartment.</text>
</comment>
<organism>
    <name type="scientific">Pongo abelii</name>
    <name type="common">Sumatran orangutan</name>
    <name type="synonym">Pongo pygmaeus abelii</name>
    <dbReference type="NCBI Taxonomy" id="9601"/>
    <lineage>
        <taxon>Eukaryota</taxon>
        <taxon>Metazoa</taxon>
        <taxon>Chordata</taxon>
        <taxon>Craniata</taxon>
        <taxon>Vertebrata</taxon>
        <taxon>Euteleostomi</taxon>
        <taxon>Mammalia</taxon>
        <taxon>Eutheria</taxon>
        <taxon>Euarchontoglires</taxon>
        <taxon>Primates</taxon>
        <taxon>Haplorrhini</taxon>
        <taxon>Catarrhini</taxon>
        <taxon>Hominidae</taxon>
        <taxon>Pongo</taxon>
    </lineage>
</organism>
<keyword id="KW-0175">Coiled coil</keyword>
<keyword id="KW-0963">Cytoplasm</keyword>
<keyword id="KW-0931">ER-Golgi transport</keyword>
<keyword id="KW-0333">Golgi apparatus</keyword>
<keyword id="KW-0343">GTPase activation</keyword>
<keyword id="KW-0472">Membrane</keyword>
<keyword id="KW-0479">Metal-binding</keyword>
<keyword id="KW-0597">Phosphoprotein</keyword>
<keyword id="KW-0653">Protein transport</keyword>
<keyword id="KW-1185">Reference proteome</keyword>
<keyword id="KW-0813">Transport</keyword>
<keyword id="KW-0862">Zinc</keyword>
<keyword id="KW-0863">Zinc-finger</keyword>
<name>ARFG3_PONAB</name>
<sequence>MGDPSKQDILTIFKRLRSVPTNKVCFDCGAKNPSWASITYGVFLCIDCSGSHRSLGVHLSFIRSTELDSNWSWFQLRCMQVGGNANASSFFHQHGCSTNDTNAKYNSRAAQLYREKIKSLASQATRKHGTDLWLDSCVVPPLSPPPKEEDFFASHVSPEVSDTAWASAIAEPSSLTSRPAETTLENNEGGQEQGPCVEGLNVPTKATLEVSSIIKKKPNQAKKGLGAKKRSLGAQKLANTCFNEIEKQAQAADKMKEQEDLAKAAPKEESIVSSLRLAYKDLEIQMKKDEKMNISGKKNVDSDRLGMGFGNCRSGISHSVTSDMQTIEQESPIMAKPRKKYNDDGDDSYFTSSSRYFDEPVELRSGSFSSWDDSSDSYWKKETSKDTETVLKTTGYSDRPTARHKPDYEPVENTDEAQKKFGNVKAISSDMYFGRQAQADYETRARLERLSASSSISSADLFEEQRKQAAGNYSLSSVLPNAPDMAQFKQGVRSVAGKLSVFANGVVTSIQDRYGS</sequence>
<dbReference type="EMBL" id="CR860231">
    <property type="protein sequence ID" value="CAH92373.1"/>
    <property type="molecule type" value="mRNA"/>
</dbReference>
<dbReference type="RefSeq" id="NP_001126398.1">
    <property type="nucleotide sequence ID" value="NM_001132926.2"/>
</dbReference>
<dbReference type="SMR" id="Q5R787"/>
<dbReference type="FunCoup" id="Q5R787">
    <property type="interactions" value="2156"/>
</dbReference>
<dbReference type="STRING" id="9601.ENSPPYP00000013284"/>
<dbReference type="Ensembl" id="ENSPPYT00000013823.3">
    <property type="protein sequence ID" value="ENSPPYP00000013284.2"/>
    <property type="gene ID" value="ENSPPYG00000011903.3"/>
</dbReference>
<dbReference type="GeneID" id="100173380"/>
<dbReference type="KEGG" id="pon:100173380"/>
<dbReference type="CTD" id="26286"/>
<dbReference type="eggNOG" id="KOG0706">
    <property type="taxonomic scope" value="Eukaryota"/>
</dbReference>
<dbReference type="GeneTree" id="ENSGT00940000158466"/>
<dbReference type="HOGENOM" id="CLU_023062_6_2_1"/>
<dbReference type="InParanoid" id="Q5R787"/>
<dbReference type="OMA" id="ENGPSKV"/>
<dbReference type="OrthoDB" id="983479at2759"/>
<dbReference type="TreeFam" id="TF313985"/>
<dbReference type="Proteomes" id="UP000001595">
    <property type="component" value="Chromosome 22"/>
</dbReference>
<dbReference type="GO" id="GO:0005829">
    <property type="term" value="C:cytosol"/>
    <property type="evidence" value="ECO:0007669"/>
    <property type="project" value="Ensembl"/>
</dbReference>
<dbReference type="GO" id="GO:0000139">
    <property type="term" value="C:Golgi membrane"/>
    <property type="evidence" value="ECO:0007669"/>
    <property type="project" value="UniProtKB-SubCell"/>
</dbReference>
<dbReference type="GO" id="GO:0005096">
    <property type="term" value="F:GTPase activator activity"/>
    <property type="evidence" value="ECO:0007669"/>
    <property type="project" value="UniProtKB-KW"/>
</dbReference>
<dbReference type="GO" id="GO:0008270">
    <property type="term" value="F:zinc ion binding"/>
    <property type="evidence" value="ECO:0007669"/>
    <property type="project" value="UniProtKB-KW"/>
</dbReference>
<dbReference type="GO" id="GO:0048205">
    <property type="term" value="P:COPI coating of Golgi vesicle"/>
    <property type="evidence" value="ECO:0007669"/>
    <property type="project" value="TreeGrafter"/>
</dbReference>
<dbReference type="GO" id="GO:0009306">
    <property type="term" value="P:protein secretion"/>
    <property type="evidence" value="ECO:0007669"/>
    <property type="project" value="Ensembl"/>
</dbReference>
<dbReference type="CDD" id="cd09028">
    <property type="entry name" value="ArfGap_ArfGap3"/>
    <property type="match status" value="1"/>
</dbReference>
<dbReference type="FunFam" id="1.10.220.150:FF:000004">
    <property type="entry name" value="Putative ADP-ribosylation factor GTPase-activating protein 2"/>
    <property type="match status" value="1"/>
</dbReference>
<dbReference type="Gene3D" id="1.10.220.150">
    <property type="entry name" value="Arf GTPase activating protein"/>
    <property type="match status" value="1"/>
</dbReference>
<dbReference type="InterPro" id="IPR037278">
    <property type="entry name" value="ARFGAP/RecO"/>
</dbReference>
<dbReference type="InterPro" id="IPR001164">
    <property type="entry name" value="ArfGAP_dom"/>
</dbReference>
<dbReference type="InterPro" id="IPR038508">
    <property type="entry name" value="ArfGAP_dom_sf"/>
</dbReference>
<dbReference type="PANTHER" id="PTHR45686">
    <property type="entry name" value="ADP-RIBOSYLATION FACTOR GTPASE ACTIVATING PROTEIN 3, ISOFORM H-RELATED"/>
    <property type="match status" value="1"/>
</dbReference>
<dbReference type="PANTHER" id="PTHR45686:SF1">
    <property type="entry name" value="ADP-RIBOSYLATION FACTOR GTPASE-ACTIVATING PROTEIN 3"/>
    <property type="match status" value="1"/>
</dbReference>
<dbReference type="Pfam" id="PF01412">
    <property type="entry name" value="ArfGap"/>
    <property type="match status" value="1"/>
</dbReference>
<dbReference type="PRINTS" id="PR00405">
    <property type="entry name" value="REVINTRACTNG"/>
</dbReference>
<dbReference type="SMART" id="SM00105">
    <property type="entry name" value="ArfGap"/>
    <property type="match status" value="1"/>
</dbReference>
<dbReference type="SUPFAM" id="SSF57863">
    <property type="entry name" value="ArfGap/RecO-like zinc finger"/>
    <property type="match status" value="1"/>
</dbReference>
<dbReference type="PROSITE" id="PS50115">
    <property type="entry name" value="ARFGAP"/>
    <property type="match status" value="1"/>
</dbReference>
<gene>
    <name evidence="1" type="primary">ARFGAP3</name>
</gene>
<protein>
    <recommendedName>
        <fullName>ADP-ribosylation factor GTPase-activating protein 3</fullName>
        <shortName>ARF GAP 3</shortName>
    </recommendedName>
</protein>